<evidence type="ECO:0000250" key="1">
    <source>
        <dbReference type="UniProtKB" id="P10219"/>
    </source>
</evidence>
<evidence type="ECO:0000255" key="2">
    <source>
        <dbReference type="HAMAP-Rule" id="MF_04021"/>
    </source>
</evidence>
<evidence type="ECO:0000269" key="3">
    <source>
    </source>
</evidence>
<evidence type="ECO:0000269" key="4">
    <source>
    </source>
</evidence>
<proteinExistence type="inferred from homology"/>
<feature type="chain" id="PRO_0000418247" description="Small capsomere-interacting protein">
    <location>
        <begin position="1"/>
        <end position="75"/>
    </location>
</feature>
<organismHost>
    <name type="scientific">Homo sapiens</name>
    <name type="common">Human</name>
    <dbReference type="NCBI Taxonomy" id="9606"/>
</organismHost>
<protein>
    <recommendedName>
        <fullName evidence="2">Small capsomere-interacting protein</fullName>
    </recommendedName>
</protein>
<organism>
    <name type="scientific">Human cytomegalovirus (strain Merlin)</name>
    <name type="common">HHV-5</name>
    <name type="synonym">Human herpesvirus 5</name>
    <dbReference type="NCBI Taxonomy" id="295027"/>
    <lineage>
        <taxon>Viruses</taxon>
        <taxon>Duplodnaviria</taxon>
        <taxon>Heunggongvirae</taxon>
        <taxon>Peploviricota</taxon>
        <taxon>Herviviricetes</taxon>
        <taxon>Herpesvirales</taxon>
        <taxon>Orthoherpesviridae</taxon>
        <taxon>Betaherpesvirinae</taxon>
        <taxon>Cytomegalovirus</taxon>
        <taxon>Cytomegalovirus humanbeta5</taxon>
        <taxon>Human cytomegalovirus</taxon>
    </lineage>
</organism>
<keyword id="KW-0167">Capsid protein</keyword>
<keyword id="KW-1048">Host nucleus</keyword>
<keyword id="KW-1185">Reference proteome</keyword>
<keyword id="KW-0946">Virion</keyword>
<comment type="function">
    <text evidence="1 3 4">Participates in the assembly of the infectious particles by decorating the outer surface of the capsid shell and thus forming a layer between the capsid and the tegument. Complexes composed of the capsid protein VP5 and UL48A assemble together in the host cytoplasm and are translocated to the nucleus, where they accumulate and participate in capsid assembly.</text>
</comment>
<comment type="function">
    <text evidence="2">Participates in the assembly of the infectious particles by decorating the outer surface of the capsid shell and thus forming a layer between the capsid and the tegument. Complexes composed of the major capsid protein and small capsomere-interacting protein/SCP assemble together in the host cytoplasm and are translocated to the nucleus, where they accumulate and participate in capsid assembly.</text>
</comment>
<comment type="subunit">
    <text evidence="2">Interacts with the major capsid protein/MCP.</text>
</comment>
<comment type="subcellular location">
    <subcellularLocation>
        <location evidence="2 3 4">Virion</location>
    </subcellularLocation>
    <subcellularLocation>
        <location evidence="2">Host nucleus</location>
    </subcellularLocation>
</comment>
<comment type="similarity">
    <text evidence="2">Belongs to the herpesviridae small capsomere-interacting protein family.</text>
</comment>
<reference key="1">
    <citation type="journal article" date="2004" name="J. Gen. Virol.">
        <title>Genetic content of wild-type human cytomegalovirus.</title>
        <authorList>
            <person name="Dolan A."/>
            <person name="Cunningham C."/>
            <person name="Hector R.D."/>
            <person name="Hassan-Walker A.F."/>
            <person name="Lee L."/>
            <person name="Addison C."/>
            <person name="Dargan D.J."/>
            <person name="McGeoch D.J."/>
            <person name="Gatherer D."/>
            <person name="Emery V.C."/>
            <person name="Griffiths P.D."/>
            <person name="Sinzger C."/>
            <person name="McSharry B.P."/>
            <person name="Wilkinson G.W.G."/>
            <person name="Davison A.J."/>
        </authorList>
    </citation>
    <scope>NUCLEOTIDE SEQUENCE [LARGE SCALE GENOMIC DNA]</scope>
</reference>
<reference key="2">
    <citation type="journal article" date="1996" name="J. Virol.">
        <title>Human cytomegalovirus (HCMV) smallest capsid protein identified as product of short open reading frame located between HCMV UL48 and UL49.</title>
        <authorList>
            <person name="Gibson W."/>
            <person name="Clopper K.S."/>
            <person name="Britt W.J."/>
            <person name="Baxter M.K."/>
        </authorList>
    </citation>
    <scope>FUNCTION</scope>
    <scope>SUBCELLULAR LOCATION</scope>
</reference>
<reference key="3">
    <citation type="journal article" date="2001" name="J. Virol.">
        <title>Genetic evidence of an essential role for cytomegalovirus small capsid protein in viral growth.</title>
        <authorList>
            <person name="Borst E.M."/>
            <person name="Mathys S."/>
            <person name="Wagner M."/>
            <person name="Muranyi W."/>
            <person name="Messerle M."/>
        </authorList>
    </citation>
    <scope>FUNCTION</scope>
    <scope>SUBCELLULAR LOCATION</scope>
</reference>
<dbReference type="EMBL" id="AY446894">
    <property type="protein sequence ID" value="AAR31612.1"/>
    <property type="molecule type" value="Genomic_DNA"/>
</dbReference>
<dbReference type="RefSeq" id="YP_081507.1">
    <property type="nucleotide sequence ID" value="NC_006273.2"/>
</dbReference>
<dbReference type="SMR" id="F5HEN7"/>
<dbReference type="DNASU" id="3077541"/>
<dbReference type="GeneID" id="3077541"/>
<dbReference type="KEGG" id="vg:3077541"/>
<dbReference type="Reactome" id="R-HSA-9609690">
    <property type="pathway name" value="HCMV Early Events"/>
</dbReference>
<dbReference type="Reactome" id="R-HSA-9610379">
    <property type="pathway name" value="HCMV Late Events"/>
</dbReference>
<dbReference type="Proteomes" id="UP000000938">
    <property type="component" value="Segment"/>
</dbReference>
<dbReference type="GO" id="GO:0042025">
    <property type="term" value="C:host cell nucleus"/>
    <property type="evidence" value="ECO:0007669"/>
    <property type="project" value="UniProtKB-SubCell"/>
</dbReference>
<dbReference type="GO" id="GO:0019028">
    <property type="term" value="C:viral capsid"/>
    <property type="evidence" value="ECO:0000304"/>
    <property type="project" value="Reactome"/>
</dbReference>
<dbReference type="GO" id="GO:0016032">
    <property type="term" value="P:viral process"/>
    <property type="evidence" value="ECO:0007669"/>
    <property type="project" value="UniProtKB-UniRule"/>
</dbReference>
<dbReference type="HAMAP" id="MF_04021">
    <property type="entry name" value="HSV_SCP_betahv"/>
    <property type="match status" value="1"/>
</dbReference>
<dbReference type="InterPro" id="IPR031385">
    <property type="entry name" value="HV_small_capsid"/>
</dbReference>
<dbReference type="Pfam" id="PF17086">
    <property type="entry name" value="HV_small_capsid"/>
    <property type="match status" value="1"/>
</dbReference>
<accession>F5HEN7</accession>
<gene>
    <name evidence="2" type="primary">SCP</name>
    <name type="ordered locus">UL48A</name>
</gene>
<name>SCP_HCMVM</name>
<sequence length="75" mass="8495">MSNTAPGPTVANKRDEKHRHVVNVVLELPTEISEATHPVLATMLSKYTRMSSLFNDKCAFKLDLLRMIAVSRTRR</sequence>